<proteinExistence type="inferred from homology"/>
<evidence type="ECO:0000250" key="1"/>
<evidence type="ECO:0000256" key="2">
    <source>
        <dbReference type="SAM" id="MobiDB-lite"/>
    </source>
</evidence>
<evidence type="ECO:0000305" key="3"/>
<protein>
    <recommendedName>
        <fullName>EKC/KEOPS complex subunit CGI121</fullName>
    </recommendedName>
</protein>
<comment type="function">
    <text evidence="1">Component of the EKC/KEOPS complex that is required for the formation of a threonylcarbamoyl group on adenosine at position 37 (t(6)A37) in tRNAs that read codons beginning with adenine. The complex is probably involved in the transfer of the threonylcarbamoyl moiety of threonylcarbamoyl-AMP (TC-AMP) to the N6 group of A37. CGI121 acts as an allosteric effector that regulates the t(6)A activity of the complex. The EKC/KEOPS complex also promotes both telomere uncapping and telomere elongation. The complex is required for efficient recruitment of transcriptional coactivators. CGI121 is not required for tRNA modification (By similarity).</text>
</comment>
<comment type="subunit">
    <text evidence="1">Component of the EKC/KEOPS complex composed of at least BUD32, CGI121, GON7, KAE1 and PCC1; the whole complex dimerizes.</text>
</comment>
<comment type="subcellular location">
    <subcellularLocation>
        <location evidence="1">Nucleus</location>
    </subcellularLocation>
    <subcellularLocation>
        <location evidence="1">Chromosome</location>
        <location evidence="1">Telomere</location>
    </subcellularLocation>
</comment>
<comment type="similarity">
    <text evidence="3">Belongs to the CGI121/TPRKB family.</text>
</comment>
<gene>
    <name type="primary">CGI121</name>
    <name type="ORF">SNOG_09791</name>
</gene>
<name>CG121_PHANO</name>
<organism>
    <name type="scientific">Phaeosphaeria nodorum (strain SN15 / ATCC MYA-4574 / FGSC 10173)</name>
    <name type="common">Glume blotch fungus</name>
    <name type="synonym">Parastagonospora nodorum</name>
    <dbReference type="NCBI Taxonomy" id="321614"/>
    <lineage>
        <taxon>Eukaryota</taxon>
        <taxon>Fungi</taxon>
        <taxon>Dikarya</taxon>
        <taxon>Ascomycota</taxon>
        <taxon>Pezizomycotina</taxon>
        <taxon>Dothideomycetes</taxon>
        <taxon>Pleosporomycetidae</taxon>
        <taxon>Pleosporales</taxon>
        <taxon>Pleosporineae</taxon>
        <taxon>Phaeosphaeriaceae</taxon>
        <taxon>Parastagonospora</taxon>
    </lineage>
</organism>
<accession>Q0UEM3</accession>
<keyword id="KW-0010">Activator</keyword>
<keyword id="KW-0158">Chromosome</keyword>
<keyword id="KW-0539">Nucleus</keyword>
<keyword id="KW-0779">Telomere</keyword>
<keyword id="KW-0804">Transcription</keyword>
<keyword id="KW-0805">Transcription regulation</keyword>
<keyword id="KW-0819">tRNA processing</keyword>
<sequence length="233" mass="25652">MAHVRTFTLPHYEAYPVHVALFKDVKNPSYLKSQLLEANPAFDYAFLDAAMVARLGIAWWSHAAANDRPQILSPTHLLSTTFITIHALCTHRQKTRTPHSELVFRLSPNNNIGESYKKFGISDTTTHLIAVKLPLKSSDAEAKEWLVDGEITNESVSQHLGSVVEGTSVEISEKGEELGQWCDIDKIRKVYKLGDGSAKKGKKGAAVNGDGAEKEGEKKQMEVVILGTIALKS</sequence>
<reference key="1">
    <citation type="journal article" date="2007" name="Plant Cell">
        <title>Dothideomycete-plant interactions illuminated by genome sequencing and EST analysis of the wheat pathogen Stagonospora nodorum.</title>
        <authorList>
            <person name="Hane J.K."/>
            <person name="Lowe R.G.T."/>
            <person name="Solomon P.S."/>
            <person name="Tan K.-C."/>
            <person name="Schoch C.L."/>
            <person name="Spatafora J.W."/>
            <person name="Crous P.W."/>
            <person name="Kodira C.D."/>
            <person name="Birren B.W."/>
            <person name="Galagan J.E."/>
            <person name="Torriani S.F.F."/>
            <person name="McDonald B.A."/>
            <person name="Oliver R.P."/>
        </authorList>
    </citation>
    <scope>NUCLEOTIDE SEQUENCE [LARGE SCALE GENOMIC DNA]</scope>
    <source>
        <strain>SN15 / ATCC MYA-4574 / FGSC 10173</strain>
    </source>
</reference>
<feature type="chain" id="PRO_0000279216" description="EKC/KEOPS complex subunit CGI121">
    <location>
        <begin position="1"/>
        <end position="233"/>
    </location>
</feature>
<feature type="region of interest" description="Disordered" evidence="2">
    <location>
        <begin position="196"/>
        <end position="215"/>
    </location>
</feature>
<dbReference type="EMBL" id="CH445339">
    <property type="protein sequence ID" value="EAT83056.2"/>
    <property type="molecule type" value="Genomic_DNA"/>
</dbReference>
<dbReference type="RefSeq" id="XP_001800078.1">
    <property type="nucleotide sequence ID" value="XM_001800026.1"/>
</dbReference>
<dbReference type="SMR" id="Q0UEM3"/>
<dbReference type="FunCoup" id="Q0UEM3">
    <property type="interactions" value="468"/>
</dbReference>
<dbReference type="STRING" id="321614.Q0UEM3"/>
<dbReference type="GeneID" id="5976983"/>
<dbReference type="KEGG" id="pno:SNOG_09791"/>
<dbReference type="VEuPathDB" id="FungiDB:JI435_097910"/>
<dbReference type="eggNOG" id="KOG4066">
    <property type="taxonomic scope" value="Eukaryota"/>
</dbReference>
<dbReference type="InParanoid" id="Q0UEM3"/>
<dbReference type="Proteomes" id="UP000001055">
    <property type="component" value="Unassembled WGS sequence"/>
</dbReference>
<dbReference type="GO" id="GO:0000781">
    <property type="term" value="C:chromosome, telomeric region"/>
    <property type="evidence" value="ECO:0007669"/>
    <property type="project" value="UniProtKB-SubCell"/>
</dbReference>
<dbReference type="GO" id="GO:0005829">
    <property type="term" value="C:cytosol"/>
    <property type="evidence" value="ECO:0000318"/>
    <property type="project" value="GO_Central"/>
</dbReference>
<dbReference type="GO" id="GO:0000408">
    <property type="term" value="C:EKC/KEOPS complex"/>
    <property type="evidence" value="ECO:0000318"/>
    <property type="project" value="GO_Central"/>
</dbReference>
<dbReference type="GO" id="GO:0005634">
    <property type="term" value="C:nucleus"/>
    <property type="evidence" value="ECO:0000318"/>
    <property type="project" value="GO_Central"/>
</dbReference>
<dbReference type="GO" id="GO:0002949">
    <property type="term" value="P:tRNA threonylcarbamoyladenosine modification"/>
    <property type="evidence" value="ECO:0000318"/>
    <property type="project" value="GO_Central"/>
</dbReference>
<dbReference type="Gene3D" id="3.30.2380.10">
    <property type="entry name" value="CGI121/TPRKB"/>
    <property type="match status" value="1"/>
</dbReference>
<dbReference type="InterPro" id="IPR013926">
    <property type="entry name" value="CGI121/TPRKB"/>
</dbReference>
<dbReference type="InterPro" id="IPR036504">
    <property type="entry name" value="CGI121/TPRKB_sf"/>
</dbReference>
<dbReference type="PANTHER" id="PTHR15840">
    <property type="entry name" value="CGI-121 FAMILY MEMBER"/>
    <property type="match status" value="1"/>
</dbReference>
<dbReference type="PANTHER" id="PTHR15840:SF10">
    <property type="entry name" value="EKC_KEOPS COMPLEX SUBUNIT TPRKB"/>
    <property type="match status" value="1"/>
</dbReference>
<dbReference type="Pfam" id="PF08617">
    <property type="entry name" value="CGI-121"/>
    <property type="match status" value="1"/>
</dbReference>
<dbReference type="SUPFAM" id="SSF143870">
    <property type="entry name" value="PF0523-like"/>
    <property type="match status" value="1"/>
</dbReference>